<accession>B0KUN5</accession>
<reference key="1">
    <citation type="submission" date="2008-01" db="EMBL/GenBank/DDBJ databases">
        <title>Complete sequence of Pseudomonas putida GB-1.</title>
        <authorList>
            <consortium name="US DOE Joint Genome Institute"/>
            <person name="Copeland A."/>
            <person name="Lucas S."/>
            <person name="Lapidus A."/>
            <person name="Barry K."/>
            <person name="Glavina del Rio T."/>
            <person name="Dalin E."/>
            <person name="Tice H."/>
            <person name="Pitluck S."/>
            <person name="Bruce D."/>
            <person name="Goodwin L."/>
            <person name="Chertkov O."/>
            <person name="Brettin T."/>
            <person name="Detter J.C."/>
            <person name="Han C."/>
            <person name="Kuske C.R."/>
            <person name="Schmutz J."/>
            <person name="Larimer F."/>
            <person name="Land M."/>
            <person name="Hauser L."/>
            <person name="Kyrpides N."/>
            <person name="Kim E."/>
            <person name="McCarthy J.K."/>
            <person name="Richardson P."/>
        </authorList>
    </citation>
    <scope>NUCLEOTIDE SEQUENCE [LARGE SCALE GENOMIC DNA]</scope>
    <source>
        <strain>GB-1</strain>
    </source>
</reference>
<keyword id="KW-0963">Cytoplasm</keyword>
<keyword id="KW-0251">Elongation factor</keyword>
<keyword id="KW-0648">Protein biosynthesis</keyword>
<dbReference type="EMBL" id="CP000926">
    <property type="protein sequence ID" value="ABY97340.1"/>
    <property type="molecule type" value="Genomic_DNA"/>
</dbReference>
<dbReference type="RefSeq" id="WP_012271109.1">
    <property type="nucleotide sequence ID" value="NC_010322.1"/>
</dbReference>
<dbReference type="SMR" id="B0KUN5"/>
<dbReference type="GeneID" id="83668691"/>
<dbReference type="KEGG" id="ppg:PputGB1_1433"/>
<dbReference type="eggNOG" id="COG0231">
    <property type="taxonomic scope" value="Bacteria"/>
</dbReference>
<dbReference type="HOGENOM" id="CLU_074944_2_1_6"/>
<dbReference type="UniPathway" id="UPA00345"/>
<dbReference type="Proteomes" id="UP000002157">
    <property type="component" value="Chromosome"/>
</dbReference>
<dbReference type="GO" id="GO:0005737">
    <property type="term" value="C:cytoplasm"/>
    <property type="evidence" value="ECO:0007669"/>
    <property type="project" value="UniProtKB-SubCell"/>
</dbReference>
<dbReference type="GO" id="GO:0003746">
    <property type="term" value="F:translation elongation factor activity"/>
    <property type="evidence" value="ECO:0007669"/>
    <property type="project" value="UniProtKB-UniRule"/>
</dbReference>
<dbReference type="GO" id="GO:0043043">
    <property type="term" value="P:peptide biosynthetic process"/>
    <property type="evidence" value="ECO:0007669"/>
    <property type="project" value="InterPro"/>
</dbReference>
<dbReference type="CDD" id="cd04470">
    <property type="entry name" value="S1_EF-P_repeat_1"/>
    <property type="match status" value="1"/>
</dbReference>
<dbReference type="CDD" id="cd05794">
    <property type="entry name" value="S1_EF-P_repeat_2"/>
    <property type="match status" value="1"/>
</dbReference>
<dbReference type="FunFam" id="2.30.30.30:FF:000003">
    <property type="entry name" value="Elongation factor P"/>
    <property type="match status" value="1"/>
</dbReference>
<dbReference type="FunFam" id="2.40.50.140:FF:000004">
    <property type="entry name" value="Elongation factor P"/>
    <property type="match status" value="1"/>
</dbReference>
<dbReference type="Gene3D" id="2.30.30.30">
    <property type="match status" value="1"/>
</dbReference>
<dbReference type="Gene3D" id="2.40.50.140">
    <property type="entry name" value="Nucleic acid-binding proteins"/>
    <property type="match status" value="2"/>
</dbReference>
<dbReference type="HAMAP" id="MF_00141">
    <property type="entry name" value="EF_P"/>
    <property type="match status" value="1"/>
</dbReference>
<dbReference type="InterPro" id="IPR015365">
    <property type="entry name" value="Elong-fact-P_C"/>
</dbReference>
<dbReference type="InterPro" id="IPR012340">
    <property type="entry name" value="NA-bd_OB-fold"/>
</dbReference>
<dbReference type="InterPro" id="IPR014722">
    <property type="entry name" value="Rib_uL2_dom2"/>
</dbReference>
<dbReference type="InterPro" id="IPR020599">
    <property type="entry name" value="Transl_elong_fac_P/YeiP"/>
</dbReference>
<dbReference type="InterPro" id="IPR013185">
    <property type="entry name" value="Transl_elong_KOW-like"/>
</dbReference>
<dbReference type="InterPro" id="IPR001059">
    <property type="entry name" value="Transl_elong_P/YeiP_cen"/>
</dbReference>
<dbReference type="InterPro" id="IPR011768">
    <property type="entry name" value="Transl_elongation_fac_P"/>
</dbReference>
<dbReference type="InterPro" id="IPR008991">
    <property type="entry name" value="Translation_prot_SH3-like_sf"/>
</dbReference>
<dbReference type="NCBIfam" id="TIGR00038">
    <property type="entry name" value="efp"/>
    <property type="match status" value="1"/>
</dbReference>
<dbReference type="NCBIfam" id="NF001810">
    <property type="entry name" value="PRK00529.1"/>
    <property type="match status" value="1"/>
</dbReference>
<dbReference type="PANTHER" id="PTHR30053">
    <property type="entry name" value="ELONGATION FACTOR P"/>
    <property type="match status" value="1"/>
</dbReference>
<dbReference type="PANTHER" id="PTHR30053:SF12">
    <property type="entry name" value="ELONGATION FACTOR P (EF-P) FAMILY PROTEIN"/>
    <property type="match status" value="1"/>
</dbReference>
<dbReference type="Pfam" id="PF01132">
    <property type="entry name" value="EFP"/>
    <property type="match status" value="1"/>
</dbReference>
<dbReference type="Pfam" id="PF08207">
    <property type="entry name" value="EFP_N"/>
    <property type="match status" value="1"/>
</dbReference>
<dbReference type="Pfam" id="PF09285">
    <property type="entry name" value="Elong-fact-P_C"/>
    <property type="match status" value="1"/>
</dbReference>
<dbReference type="PIRSF" id="PIRSF005901">
    <property type="entry name" value="EF-P"/>
    <property type="match status" value="1"/>
</dbReference>
<dbReference type="SMART" id="SM01185">
    <property type="entry name" value="EFP"/>
    <property type="match status" value="1"/>
</dbReference>
<dbReference type="SMART" id="SM00841">
    <property type="entry name" value="Elong-fact-P_C"/>
    <property type="match status" value="1"/>
</dbReference>
<dbReference type="SUPFAM" id="SSF50249">
    <property type="entry name" value="Nucleic acid-binding proteins"/>
    <property type="match status" value="2"/>
</dbReference>
<dbReference type="SUPFAM" id="SSF50104">
    <property type="entry name" value="Translation proteins SH3-like domain"/>
    <property type="match status" value="1"/>
</dbReference>
<evidence type="ECO:0000255" key="1">
    <source>
        <dbReference type="HAMAP-Rule" id="MF_00141"/>
    </source>
</evidence>
<name>EFP_PSEPG</name>
<organism>
    <name type="scientific">Pseudomonas putida (strain GB-1)</name>
    <dbReference type="NCBI Taxonomy" id="76869"/>
    <lineage>
        <taxon>Bacteria</taxon>
        <taxon>Pseudomonadati</taxon>
        <taxon>Pseudomonadota</taxon>
        <taxon>Gammaproteobacteria</taxon>
        <taxon>Pseudomonadales</taxon>
        <taxon>Pseudomonadaceae</taxon>
        <taxon>Pseudomonas</taxon>
    </lineage>
</organism>
<sequence length="189" mass="21332">MKTGKELKPGTVLRIDNDPWLVQKAEFTKSGRNSAIMKTKLKNLLTGYKTETVYGADDKLDDVILDRKEATLSFISGDSYTFMDTTDYTMYELNAEDIDAVLPYIEEGMEDICEAVFFEGRLVSVELPTTISRQVVYTENAARGDTSGKVMKPAKLKNGTEIQVADFIQIDEWIDIDTRDNSFKGRSKK</sequence>
<protein>
    <recommendedName>
        <fullName evidence="1">Elongation factor P</fullName>
        <shortName evidence="1">EF-P</shortName>
    </recommendedName>
</protein>
<proteinExistence type="inferred from homology"/>
<gene>
    <name evidence="1" type="primary">efp</name>
    <name type="ordered locus">PputGB1_1433</name>
</gene>
<feature type="chain" id="PRO_1000076526" description="Elongation factor P">
    <location>
        <begin position="1"/>
        <end position="189"/>
    </location>
</feature>
<comment type="function">
    <text evidence="1">Involved in peptide bond synthesis. Stimulates efficient translation and peptide-bond synthesis on native or reconstituted 70S ribosomes in vitro. Probably functions indirectly by altering the affinity of the ribosome for aminoacyl-tRNA, thus increasing their reactivity as acceptors for peptidyl transferase.</text>
</comment>
<comment type="pathway">
    <text evidence="1">Protein biosynthesis; polypeptide chain elongation.</text>
</comment>
<comment type="subcellular location">
    <subcellularLocation>
        <location evidence="1">Cytoplasm</location>
    </subcellularLocation>
</comment>
<comment type="similarity">
    <text evidence="1">Belongs to the elongation factor P family.</text>
</comment>